<evidence type="ECO:0000250" key="1">
    <source>
        <dbReference type="UniProtKB" id="P00730"/>
    </source>
</evidence>
<evidence type="ECO:0000250" key="2">
    <source>
        <dbReference type="UniProtKB" id="P15085"/>
    </source>
</evidence>
<evidence type="ECO:0000250" key="3">
    <source>
        <dbReference type="UniProtKB" id="P38836"/>
    </source>
</evidence>
<evidence type="ECO:0000255" key="4"/>
<evidence type="ECO:0000255" key="5">
    <source>
        <dbReference type="PROSITE-ProRule" id="PRU01379"/>
    </source>
</evidence>
<evidence type="ECO:0000256" key="6">
    <source>
        <dbReference type="SAM" id="MobiDB-lite"/>
    </source>
</evidence>
<evidence type="ECO:0000305" key="7"/>
<name>ECM14_BLAGS</name>
<dbReference type="EMBL" id="GG657469">
    <property type="protein sequence ID" value="OAT12751.1"/>
    <property type="molecule type" value="Genomic_DNA"/>
</dbReference>
<dbReference type="RefSeq" id="XP_002621440.1">
    <property type="nucleotide sequence ID" value="XM_002621394.1"/>
</dbReference>
<dbReference type="SMR" id="C5JZS0"/>
<dbReference type="STRING" id="559298.C5JZS0"/>
<dbReference type="GlyCosmos" id="C5JZS0">
    <property type="glycosylation" value="1 site, No reported glycans"/>
</dbReference>
<dbReference type="GeneID" id="8501980"/>
<dbReference type="KEGG" id="bgh:BDBG_08063"/>
<dbReference type="VEuPathDB" id="FungiDB:BDBG_08063"/>
<dbReference type="HOGENOM" id="CLU_019326_1_0_1"/>
<dbReference type="OrthoDB" id="3626597at2759"/>
<dbReference type="Proteomes" id="UP000002038">
    <property type="component" value="Unassembled WGS sequence"/>
</dbReference>
<dbReference type="GO" id="GO:0005576">
    <property type="term" value="C:extracellular region"/>
    <property type="evidence" value="ECO:0007669"/>
    <property type="project" value="UniProtKB-SubCell"/>
</dbReference>
<dbReference type="GO" id="GO:0005773">
    <property type="term" value="C:vacuole"/>
    <property type="evidence" value="ECO:0007669"/>
    <property type="project" value="UniProtKB-SubCell"/>
</dbReference>
<dbReference type="GO" id="GO:0008270">
    <property type="term" value="F:zinc ion binding"/>
    <property type="evidence" value="ECO:0007669"/>
    <property type="project" value="InterPro"/>
</dbReference>
<dbReference type="GO" id="GO:0071555">
    <property type="term" value="P:cell wall organization"/>
    <property type="evidence" value="ECO:0007669"/>
    <property type="project" value="UniProtKB-KW"/>
</dbReference>
<dbReference type="GO" id="GO:0006508">
    <property type="term" value="P:proteolysis"/>
    <property type="evidence" value="ECO:0007669"/>
    <property type="project" value="InterPro"/>
</dbReference>
<dbReference type="CDD" id="cd03860">
    <property type="entry name" value="M14_CP_A-B_like"/>
    <property type="match status" value="1"/>
</dbReference>
<dbReference type="FunFam" id="3.40.630.10:FF:000060">
    <property type="entry name" value="Putative metallocarboxypeptidase ecm14"/>
    <property type="match status" value="1"/>
</dbReference>
<dbReference type="Gene3D" id="3.40.630.10">
    <property type="entry name" value="Zn peptidases"/>
    <property type="match status" value="1"/>
</dbReference>
<dbReference type="InterPro" id="IPR000834">
    <property type="entry name" value="Peptidase_M14"/>
</dbReference>
<dbReference type="PANTHER" id="PTHR11705:SF147">
    <property type="entry name" value="INACTIVE METALLOCARBOXYPEPTIDASE ECM14"/>
    <property type="match status" value="1"/>
</dbReference>
<dbReference type="PANTHER" id="PTHR11705">
    <property type="entry name" value="PROTEASE FAMILY M14 CARBOXYPEPTIDASE A,B"/>
    <property type="match status" value="1"/>
</dbReference>
<dbReference type="Pfam" id="PF00246">
    <property type="entry name" value="Peptidase_M14"/>
    <property type="match status" value="1"/>
</dbReference>
<dbReference type="PRINTS" id="PR00765">
    <property type="entry name" value="CRBOXYPTASEA"/>
</dbReference>
<dbReference type="SMART" id="SM00631">
    <property type="entry name" value="Zn_pept"/>
    <property type="match status" value="1"/>
</dbReference>
<dbReference type="SUPFAM" id="SSF53187">
    <property type="entry name" value="Zn-dependent exopeptidases"/>
    <property type="match status" value="1"/>
</dbReference>
<dbReference type="PROSITE" id="PS00132">
    <property type="entry name" value="CARBOXYPEPT_ZN_1"/>
    <property type="match status" value="1"/>
</dbReference>
<dbReference type="PROSITE" id="PS52035">
    <property type="entry name" value="PEPTIDASE_M14"/>
    <property type="match status" value="1"/>
</dbReference>
<accession>C5JZS0</accession>
<accession>A0A179V0A9</accession>
<protein>
    <recommendedName>
        <fullName evidence="7">Inactive metallocarboxypeptidase ECM14</fullName>
    </recommendedName>
</protein>
<comment type="function">
    <text evidence="3">Inactive carboxypeptidase that may play a role in cell wall organization and biogenesis.</text>
</comment>
<comment type="cofactor">
    <cofactor evidence="1">
        <name>Zn(2+)</name>
        <dbReference type="ChEBI" id="CHEBI:29105"/>
    </cofactor>
    <text evidence="1">Binds 1 zinc ion per subunit.</text>
</comment>
<comment type="subcellular location">
    <subcellularLocation>
        <location evidence="3">Vacuole</location>
    </subcellularLocation>
    <subcellularLocation>
        <location evidence="3">Secreted</location>
    </subcellularLocation>
</comment>
<comment type="similarity">
    <text evidence="7">Belongs to the peptidase M14 family.</text>
</comment>
<comment type="caution">
    <text evidence="3">Lacks the conserved Glu residue in position 487 essential for carbopeptidase activity. The mature form lacks catalytic activity towards synthetic peptide substrates.</text>
</comment>
<gene>
    <name type="primary">ECM14</name>
    <name type="ORF">BDBG_08063</name>
</gene>
<keyword id="KW-0961">Cell wall biogenesis/degradation</keyword>
<keyword id="KW-1015">Disulfide bond</keyword>
<keyword id="KW-0325">Glycoprotein</keyword>
<keyword id="KW-0479">Metal-binding</keyword>
<keyword id="KW-1185">Reference proteome</keyword>
<keyword id="KW-0964">Secreted</keyword>
<keyword id="KW-0732">Signal</keyword>
<keyword id="KW-0926">Vacuole</keyword>
<keyword id="KW-0862">Zinc</keyword>
<sequence>MRQFTHGTLLAILALANTISAIPSFSANNYPAHPAEPLALFAQSQPQAPLGLWTRLRNSVIERLWGVPPQQRNHRGGNKQYPFYSAPASLQARYSDDVVLRFRLQTADEVKALVEASNILFLDVWASTDEWVDIRLAKDVVPSLLGLLPKSLQTAHVPLIHDLPQTVYESYPSSSQRPTDNGRGFLPSRESSSDVTNIFFEDYQPLSVIGPWMRLLASMFPSHVQLISIGSSFEGRDIPALRVGVRPANDPKPRKTVIIGGGSHAREWIGVSTVNYVAYSLITTYGKSTPISTLLEQFDFIFIPTINPDGYVHTWETDRLWRKNRQETSLPFCPGVDLDRTWGFEWNGNATGDNPCSESYGGDEPFAGTEARQLAGWVKEQTEQHNVKFIAYLDLHSYSQQVLYPYSYSCLPRPPNLENLEELAMGIAKAIRLTNRQSYTVSSACQGFTASQKKVKLDTFPRMESAGGSALDWFYNDVGVKYSYQLKLRDKGSYGFLLPRENIVPTGKEVFNAVMVLGKFLLGSDGFEGLNWEAEFQRLNEADKPILDDGDDDEEEDGQDKNDDSWIPDEYKNDNDHDDDDDGWGLRRRRKR</sequence>
<proteinExistence type="inferred from homology"/>
<feature type="signal peptide" evidence="4">
    <location>
        <begin position="1"/>
        <end position="21"/>
    </location>
</feature>
<feature type="propeptide" id="PRO_0000453231" evidence="3">
    <location>
        <begin position="22"/>
        <end position="174"/>
    </location>
</feature>
<feature type="chain" id="PRO_0000411172" description="Inactive metallocarboxypeptidase ECM14">
    <location>
        <begin position="175"/>
        <end position="592"/>
    </location>
</feature>
<feature type="domain" description="Peptidase M14" evidence="5">
    <location>
        <begin position="202"/>
        <end position="521"/>
    </location>
</feature>
<feature type="region of interest" description="Disordered" evidence="6">
    <location>
        <begin position="170"/>
        <end position="191"/>
    </location>
</feature>
<feature type="region of interest" description="Disordered" evidence="6">
    <location>
        <begin position="542"/>
        <end position="592"/>
    </location>
</feature>
<feature type="compositionally biased region" description="Polar residues" evidence="6">
    <location>
        <begin position="170"/>
        <end position="179"/>
    </location>
</feature>
<feature type="compositionally biased region" description="Acidic residues" evidence="6">
    <location>
        <begin position="548"/>
        <end position="558"/>
    </location>
</feature>
<feature type="compositionally biased region" description="Basic and acidic residues" evidence="6">
    <location>
        <begin position="559"/>
        <end position="575"/>
    </location>
</feature>
<feature type="binding site" evidence="1">
    <location>
        <begin position="264"/>
        <end position="267"/>
    </location>
    <ligand>
        <name>substrate</name>
    </ligand>
</feature>
<feature type="binding site" evidence="5">
    <location>
        <position position="264"/>
    </location>
    <ligand>
        <name>Zn(2+)</name>
        <dbReference type="ChEBI" id="CHEBI:29105"/>
        <note>catalytic</note>
    </ligand>
</feature>
<feature type="binding site" evidence="5">
    <location>
        <position position="267"/>
    </location>
    <ligand>
        <name>Zn(2+)</name>
        <dbReference type="ChEBI" id="CHEBI:29105"/>
        <note>catalytic</note>
    </ligand>
</feature>
<feature type="binding site" evidence="1">
    <location>
        <position position="322"/>
    </location>
    <ligand>
        <name>substrate</name>
    </ligand>
</feature>
<feature type="binding site" evidence="1">
    <location>
        <begin position="339"/>
        <end position="340"/>
    </location>
    <ligand>
        <name>substrate</name>
    </ligand>
</feature>
<feature type="binding site" evidence="5">
    <location>
        <position position="396"/>
    </location>
    <ligand>
        <name>Zn(2+)</name>
        <dbReference type="ChEBI" id="CHEBI:29105"/>
        <note>catalytic</note>
    </ligand>
</feature>
<feature type="binding site" evidence="1">
    <location>
        <begin position="397"/>
        <end position="398"/>
    </location>
    <ligand>
        <name>substrate</name>
    </ligand>
</feature>
<feature type="glycosylation site" description="N-linked (GlcNAc...) asparagine" evidence="4">
    <location>
        <position position="349"/>
    </location>
</feature>
<feature type="disulfide bond" evidence="2">
    <location>
        <begin position="333"/>
        <end position="356"/>
    </location>
</feature>
<reference key="1">
    <citation type="journal article" date="2015" name="PLoS Genet.">
        <title>The dynamic genome and transcriptome of the human fungal pathogen Blastomyces and close relative Emmonsia.</title>
        <authorList>
            <person name="Munoz J.F."/>
            <person name="Gauthier G.M."/>
            <person name="Desjardins C.A."/>
            <person name="Gallo J.E."/>
            <person name="Holder J."/>
            <person name="Sullivan T.D."/>
            <person name="Marty A.J."/>
            <person name="Carmen J.C."/>
            <person name="Chen Z."/>
            <person name="Ding L."/>
            <person name="Gujja S."/>
            <person name="Magrini V."/>
            <person name="Misas E."/>
            <person name="Mitreva M."/>
            <person name="Priest M."/>
            <person name="Saif S."/>
            <person name="Whiston E.A."/>
            <person name="Young S."/>
            <person name="Zeng Q."/>
            <person name="Goldman W.E."/>
            <person name="Mardis E.R."/>
            <person name="Taylor J.W."/>
            <person name="McEwen J.G."/>
            <person name="Clay O.K."/>
            <person name="Klein B.S."/>
            <person name="Cuomo C.A."/>
        </authorList>
    </citation>
    <scope>NUCLEOTIDE SEQUENCE [LARGE SCALE GENOMIC DNA]</scope>
    <source>
        <strain>SLH14081</strain>
    </source>
</reference>
<organism>
    <name type="scientific">Blastomyces gilchristii (strain SLH14081)</name>
    <name type="common">Blastomyces dermatitidis</name>
    <dbReference type="NCBI Taxonomy" id="559298"/>
    <lineage>
        <taxon>Eukaryota</taxon>
        <taxon>Fungi</taxon>
        <taxon>Dikarya</taxon>
        <taxon>Ascomycota</taxon>
        <taxon>Pezizomycotina</taxon>
        <taxon>Eurotiomycetes</taxon>
        <taxon>Eurotiomycetidae</taxon>
        <taxon>Onygenales</taxon>
        <taxon>Ajellomycetaceae</taxon>
        <taxon>Blastomyces</taxon>
    </lineage>
</organism>